<accession>Q6XBV1</accession>
<name>CYB_GENGE</name>
<proteinExistence type="inferred from homology"/>
<protein>
    <recommendedName>
        <fullName>Cytochrome b</fullName>
    </recommendedName>
    <alternativeName>
        <fullName>Complex III subunit 3</fullName>
    </alternativeName>
    <alternativeName>
        <fullName>Complex III subunit III</fullName>
    </alternativeName>
    <alternativeName>
        <fullName>Cytochrome b-c1 complex subunit 3</fullName>
    </alternativeName>
    <alternativeName>
        <fullName>Ubiquinol-cytochrome-c reductase complex cytochrome b subunit</fullName>
    </alternativeName>
</protein>
<gene>
    <name type="primary">MT-CYB</name>
    <name type="synonym">COB</name>
    <name type="synonym">CYTB</name>
    <name type="synonym">MTCYB</name>
</gene>
<keyword id="KW-0249">Electron transport</keyword>
<keyword id="KW-0349">Heme</keyword>
<keyword id="KW-0408">Iron</keyword>
<keyword id="KW-0472">Membrane</keyword>
<keyword id="KW-0479">Metal-binding</keyword>
<keyword id="KW-0496">Mitochondrion</keyword>
<keyword id="KW-0999">Mitochondrion inner membrane</keyword>
<keyword id="KW-0679">Respiratory chain</keyword>
<keyword id="KW-0812">Transmembrane</keyword>
<keyword id="KW-1133">Transmembrane helix</keyword>
<keyword id="KW-0813">Transport</keyword>
<keyword id="KW-0830">Ubiquinone</keyword>
<organism>
    <name type="scientific">Genetta genetta</name>
    <name type="common">Small-spotted genet</name>
    <dbReference type="NCBI Taxonomy" id="94190"/>
    <lineage>
        <taxon>Eukaryota</taxon>
        <taxon>Metazoa</taxon>
        <taxon>Chordata</taxon>
        <taxon>Craniata</taxon>
        <taxon>Vertebrata</taxon>
        <taxon>Euteleostomi</taxon>
        <taxon>Mammalia</taxon>
        <taxon>Eutheria</taxon>
        <taxon>Laurasiatheria</taxon>
        <taxon>Carnivora</taxon>
        <taxon>Feliformia</taxon>
        <taxon>Viverridae</taxon>
        <taxon>Viverrinae</taxon>
        <taxon>Genetta</taxon>
    </lineage>
</organism>
<feature type="chain" id="PRO_0000247808" description="Cytochrome b">
    <location>
        <begin position="1"/>
        <end position="379"/>
    </location>
</feature>
<feature type="transmembrane region" description="Helical" evidence="2">
    <location>
        <begin position="33"/>
        <end position="53"/>
    </location>
</feature>
<feature type="transmembrane region" description="Helical" evidence="2">
    <location>
        <begin position="77"/>
        <end position="98"/>
    </location>
</feature>
<feature type="transmembrane region" description="Helical" evidence="2">
    <location>
        <begin position="113"/>
        <end position="133"/>
    </location>
</feature>
<feature type="transmembrane region" description="Helical" evidence="2">
    <location>
        <begin position="178"/>
        <end position="198"/>
    </location>
</feature>
<feature type="transmembrane region" description="Helical" evidence="2">
    <location>
        <begin position="226"/>
        <end position="246"/>
    </location>
</feature>
<feature type="transmembrane region" description="Helical" evidence="2">
    <location>
        <begin position="288"/>
        <end position="308"/>
    </location>
</feature>
<feature type="transmembrane region" description="Helical" evidence="2">
    <location>
        <begin position="320"/>
        <end position="340"/>
    </location>
</feature>
<feature type="transmembrane region" description="Helical" evidence="2">
    <location>
        <begin position="347"/>
        <end position="367"/>
    </location>
</feature>
<feature type="binding site" description="axial binding residue" evidence="2">
    <location>
        <position position="83"/>
    </location>
    <ligand>
        <name>heme b</name>
        <dbReference type="ChEBI" id="CHEBI:60344"/>
        <label>b562</label>
    </ligand>
    <ligandPart>
        <name>Fe</name>
        <dbReference type="ChEBI" id="CHEBI:18248"/>
    </ligandPart>
</feature>
<feature type="binding site" description="axial binding residue" evidence="2">
    <location>
        <position position="97"/>
    </location>
    <ligand>
        <name>heme b</name>
        <dbReference type="ChEBI" id="CHEBI:60344"/>
        <label>b566</label>
    </ligand>
    <ligandPart>
        <name>Fe</name>
        <dbReference type="ChEBI" id="CHEBI:18248"/>
    </ligandPart>
</feature>
<feature type="binding site" description="axial binding residue" evidence="2">
    <location>
        <position position="182"/>
    </location>
    <ligand>
        <name>heme b</name>
        <dbReference type="ChEBI" id="CHEBI:60344"/>
        <label>b562</label>
    </ligand>
    <ligandPart>
        <name>Fe</name>
        <dbReference type="ChEBI" id="CHEBI:18248"/>
    </ligandPart>
</feature>
<feature type="binding site" description="axial binding residue" evidence="2">
    <location>
        <position position="196"/>
    </location>
    <ligand>
        <name>heme b</name>
        <dbReference type="ChEBI" id="CHEBI:60344"/>
        <label>b566</label>
    </ligand>
    <ligandPart>
        <name>Fe</name>
        <dbReference type="ChEBI" id="CHEBI:18248"/>
    </ligandPart>
</feature>
<feature type="binding site" evidence="2">
    <location>
        <position position="201"/>
    </location>
    <ligand>
        <name>a ubiquinone</name>
        <dbReference type="ChEBI" id="CHEBI:16389"/>
    </ligand>
</feature>
<evidence type="ECO:0000250" key="1"/>
<evidence type="ECO:0000250" key="2">
    <source>
        <dbReference type="UniProtKB" id="P00157"/>
    </source>
</evidence>
<evidence type="ECO:0000255" key="3">
    <source>
        <dbReference type="PROSITE-ProRule" id="PRU00967"/>
    </source>
</evidence>
<evidence type="ECO:0000255" key="4">
    <source>
        <dbReference type="PROSITE-ProRule" id="PRU00968"/>
    </source>
</evidence>
<geneLocation type="mitochondrion"/>
<dbReference type="EMBL" id="AY241906">
    <property type="protein sequence ID" value="AAP73026.1"/>
    <property type="molecule type" value="Genomic_DNA"/>
</dbReference>
<dbReference type="SMR" id="Q6XBV1"/>
<dbReference type="GO" id="GO:0005743">
    <property type="term" value="C:mitochondrial inner membrane"/>
    <property type="evidence" value="ECO:0007669"/>
    <property type="project" value="UniProtKB-SubCell"/>
</dbReference>
<dbReference type="GO" id="GO:0045275">
    <property type="term" value="C:respiratory chain complex III"/>
    <property type="evidence" value="ECO:0007669"/>
    <property type="project" value="InterPro"/>
</dbReference>
<dbReference type="GO" id="GO:0046872">
    <property type="term" value="F:metal ion binding"/>
    <property type="evidence" value="ECO:0007669"/>
    <property type="project" value="UniProtKB-KW"/>
</dbReference>
<dbReference type="GO" id="GO:0008121">
    <property type="term" value="F:ubiquinol-cytochrome-c reductase activity"/>
    <property type="evidence" value="ECO:0007669"/>
    <property type="project" value="InterPro"/>
</dbReference>
<dbReference type="GO" id="GO:0006122">
    <property type="term" value="P:mitochondrial electron transport, ubiquinol to cytochrome c"/>
    <property type="evidence" value="ECO:0007669"/>
    <property type="project" value="TreeGrafter"/>
</dbReference>
<dbReference type="CDD" id="cd00290">
    <property type="entry name" value="cytochrome_b_C"/>
    <property type="match status" value="1"/>
</dbReference>
<dbReference type="CDD" id="cd00284">
    <property type="entry name" value="Cytochrome_b_N"/>
    <property type="match status" value="1"/>
</dbReference>
<dbReference type="FunFam" id="1.20.810.10:FF:000002">
    <property type="entry name" value="Cytochrome b"/>
    <property type="match status" value="1"/>
</dbReference>
<dbReference type="Gene3D" id="1.20.810.10">
    <property type="entry name" value="Cytochrome Bc1 Complex, Chain C"/>
    <property type="match status" value="1"/>
</dbReference>
<dbReference type="InterPro" id="IPR005798">
    <property type="entry name" value="Cyt_b/b6_C"/>
</dbReference>
<dbReference type="InterPro" id="IPR036150">
    <property type="entry name" value="Cyt_b/b6_C_sf"/>
</dbReference>
<dbReference type="InterPro" id="IPR005797">
    <property type="entry name" value="Cyt_b/b6_N"/>
</dbReference>
<dbReference type="InterPro" id="IPR027387">
    <property type="entry name" value="Cytb/b6-like_sf"/>
</dbReference>
<dbReference type="InterPro" id="IPR030689">
    <property type="entry name" value="Cytochrome_b"/>
</dbReference>
<dbReference type="InterPro" id="IPR048260">
    <property type="entry name" value="Cytochrome_b_C_euk/bac"/>
</dbReference>
<dbReference type="InterPro" id="IPR048259">
    <property type="entry name" value="Cytochrome_b_N_euk/bac"/>
</dbReference>
<dbReference type="InterPro" id="IPR016174">
    <property type="entry name" value="Di-haem_cyt_TM"/>
</dbReference>
<dbReference type="PANTHER" id="PTHR19271">
    <property type="entry name" value="CYTOCHROME B"/>
    <property type="match status" value="1"/>
</dbReference>
<dbReference type="PANTHER" id="PTHR19271:SF16">
    <property type="entry name" value="CYTOCHROME B"/>
    <property type="match status" value="1"/>
</dbReference>
<dbReference type="Pfam" id="PF00032">
    <property type="entry name" value="Cytochrom_B_C"/>
    <property type="match status" value="1"/>
</dbReference>
<dbReference type="Pfam" id="PF00033">
    <property type="entry name" value="Cytochrome_B"/>
    <property type="match status" value="1"/>
</dbReference>
<dbReference type="PIRSF" id="PIRSF038885">
    <property type="entry name" value="COB"/>
    <property type="match status" value="1"/>
</dbReference>
<dbReference type="SUPFAM" id="SSF81648">
    <property type="entry name" value="a domain/subunit of cytochrome bc1 complex (Ubiquinol-cytochrome c reductase)"/>
    <property type="match status" value="1"/>
</dbReference>
<dbReference type="SUPFAM" id="SSF81342">
    <property type="entry name" value="Transmembrane di-heme cytochromes"/>
    <property type="match status" value="1"/>
</dbReference>
<dbReference type="PROSITE" id="PS51003">
    <property type="entry name" value="CYTB_CTER"/>
    <property type="match status" value="1"/>
</dbReference>
<dbReference type="PROSITE" id="PS51002">
    <property type="entry name" value="CYTB_NTER"/>
    <property type="match status" value="1"/>
</dbReference>
<sequence>MTNIRKSHPLAKIINESFIDLPTPSNISAWWNFGSLLGVCLIIQILTGLFLAMHYTSDTMTAFSSVTHICRDVNYGWIIRYMHANGASMFFICLFMHVGRGVYYGSYAFTETWNIGILLMYTVMATAFMGYVLPWGQMSFWGATVITNLLSAIPYIGTNLVEWIWGGFSVDKATLTRFFAFHFILPFIISTLAAVHLLFLHETGSNNPSGVMSDSDKIPFHPYYTIKDILGLLLLILVLMLLVLFSPDLLGDPDNYIPANPLNTPPHIKPEWYFLFAYAILRSIPNKLGGVLALVLSILILAIIPLLHTSKQRSMMFRPLSQCLFWLLVADLLTLTWIGGQPVEHPFITIGQLASILYFSIFLILMPVSGIIENRLLKW</sequence>
<comment type="function">
    <text evidence="2">Component of the ubiquinol-cytochrome c reductase complex (complex III or cytochrome b-c1 complex) that is part of the mitochondrial respiratory chain. The b-c1 complex mediates electron transfer from ubiquinol to cytochrome c. Contributes to the generation of a proton gradient across the mitochondrial membrane that is then used for ATP synthesis.</text>
</comment>
<comment type="cofactor">
    <cofactor evidence="2">
        <name>heme b</name>
        <dbReference type="ChEBI" id="CHEBI:60344"/>
    </cofactor>
    <text evidence="2">Binds 2 heme b groups non-covalently.</text>
</comment>
<comment type="subunit">
    <text evidence="2">The cytochrome bc1 complex contains 11 subunits: 3 respiratory subunits (MT-CYB, CYC1 and UQCRFS1), 2 core proteins (UQCRC1 and UQCRC2) and 6 low-molecular weight proteins (UQCRH/QCR6, UQCRB/QCR7, UQCRQ/QCR8, UQCR10/QCR9, UQCR11/QCR10 and a cleavage product of UQCRFS1). This cytochrome bc1 complex then forms a dimer.</text>
</comment>
<comment type="subcellular location">
    <subcellularLocation>
        <location evidence="2">Mitochondrion inner membrane</location>
        <topology evidence="2">Multi-pass membrane protein</topology>
    </subcellularLocation>
</comment>
<comment type="miscellaneous">
    <text evidence="1">Heme 1 (or BL or b562) is low-potential and absorbs at about 562 nm, and heme 2 (or BH or b566) is high-potential and absorbs at about 566 nm.</text>
</comment>
<comment type="similarity">
    <text evidence="3 4">Belongs to the cytochrome b family.</text>
</comment>
<comment type="caution">
    <text evidence="2">The full-length protein contains only eight transmembrane helices, not nine as predicted by bioinformatics tools.</text>
</comment>
<reference key="1">
    <citation type="journal article" date="2004" name="Biol. J. Linn. Soc. Lond.">
        <title>Genets (Carnivora, Viverridae) in Africa: an evolutionary synthesis based on cytochrome b sequences and morphological characters.</title>
        <authorList>
            <person name="Gaubert P."/>
            <person name="Fernandes C.A."/>
            <person name="Bruford M.W."/>
            <person name="Veron G."/>
        </authorList>
    </citation>
    <scope>NUCLEOTIDE SEQUENCE [GENOMIC DNA]</scope>
</reference>